<reference key="1">
    <citation type="journal article" date="1999" name="Nature">
        <title>Sequence and analysis of chromosome 4 of the plant Arabidopsis thaliana.</title>
        <authorList>
            <person name="Mayer K.F.X."/>
            <person name="Schueller C."/>
            <person name="Wambutt R."/>
            <person name="Murphy G."/>
            <person name="Volckaert G."/>
            <person name="Pohl T."/>
            <person name="Duesterhoeft A."/>
            <person name="Stiekema W."/>
            <person name="Entian K.-D."/>
            <person name="Terryn N."/>
            <person name="Harris B."/>
            <person name="Ansorge W."/>
            <person name="Brandt P."/>
            <person name="Grivell L.A."/>
            <person name="Rieger M."/>
            <person name="Weichselgartner M."/>
            <person name="de Simone V."/>
            <person name="Obermaier B."/>
            <person name="Mache R."/>
            <person name="Mueller M."/>
            <person name="Kreis M."/>
            <person name="Delseny M."/>
            <person name="Puigdomenech P."/>
            <person name="Watson M."/>
            <person name="Schmidtheini T."/>
            <person name="Reichert B."/>
            <person name="Portetelle D."/>
            <person name="Perez-Alonso M."/>
            <person name="Boutry M."/>
            <person name="Bancroft I."/>
            <person name="Vos P."/>
            <person name="Hoheisel J."/>
            <person name="Zimmermann W."/>
            <person name="Wedler H."/>
            <person name="Ridley P."/>
            <person name="Langham S.-A."/>
            <person name="McCullagh B."/>
            <person name="Bilham L."/>
            <person name="Robben J."/>
            <person name="van der Schueren J."/>
            <person name="Grymonprez B."/>
            <person name="Chuang Y.-J."/>
            <person name="Vandenbussche F."/>
            <person name="Braeken M."/>
            <person name="Weltjens I."/>
            <person name="Voet M."/>
            <person name="Bastiaens I."/>
            <person name="Aert R."/>
            <person name="Defoor E."/>
            <person name="Weitzenegger T."/>
            <person name="Bothe G."/>
            <person name="Ramsperger U."/>
            <person name="Hilbert H."/>
            <person name="Braun M."/>
            <person name="Holzer E."/>
            <person name="Brandt A."/>
            <person name="Peters S."/>
            <person name="van Staveren M."/>
            <person name="Dirkse W."/>
            <person name="Mooijman P."/>
            <person name="Klein Lankhorst R."/>
            <person name="Rose M."/>
            <person name="Hauf J."/>
            <person name="Koetter P."/>
            <person name="Berneiser S."/>
            <person name="Hempel S."/>
            <person name="Feldpausch M."/>
            <person name="Lamberth S."/>
            <person name="Van den Daele H."/>
            <person name="De Keyser A."/>
            <person name="Buysshaert C."/>
            <person name="Gielen J."/>
            <person name="Villarroel R."/>
            <person name="De Clercq R."/>
            <person name="van Montagu M."/>
            <person name="Rogers J."/>
            <person name="Cronin A."/>
            <person name="Quail M.A."/>
            <person name="Bray-Allen S."/>
            <person name="Clark L."/>
            <person name="Doggett J."/>
            <person name="Hall S."/>
            <person name="Kay M."/>
            <person name="Lennard N."/>
            <person name="McLay K."/>
            <person name="Mayes R."/>
            <person name="Pettett A."/>
            <person name="Rajandream M.A."/>
            <person name="Lyne M."/>
            <person name="Benes V."/>
            <person name="Rechmann S."/>
            <person name="Borkova D."/>
            <person name="Bloecker H."/>
            <person name="Scharfe M."/>
            <person name="Grimm M."/>
            <person name="Loehnert T.-H."/>
            <person name="Dose S."/>
            <person name="de Haan M."/>
            <person name="Maarse A.C."/>
            <person name="Schaefer M."/>
            <person name="Mueller-Auer S."/>
            <person name="Gabel C."/>
            <person name="Fuchs M."/>
            <person name="Fartmann B."/>
            <person name="Granderath K."/>
            <person name="Dauner D."/>
            <person name="Herzl A."/>
            <person name="Neumann S."/>
            <person name="Argiriou A."/>
            <person name="Vitale D."/>
            <person name="Liguori R."/>
            <person name="Piravandi E."/>
            <person name="Massenet O."/>
            <person name="Quigley F."/>
            <person name="Clabauld G."/>
            <person name="Muendlein A."/>
            <person name="Felber R."/>
            <person name="Schnabl S."/>
            <person name="Hiller R."/>
            <person name="Schmidt W."/>
            <person name="Lecharny A."/>
            <person name="Aubourg S."/>
            <person name="Chefdor F."/>
            <person name="Cooke R."/>
            <person name="Berger C."/>
            <person name="Monfort A."/>
            <person name="Casacuberta E."/>
            <person name="Gibbons T."/>
            <person name="Weber N."/>
            <person name="Vandenbol M."/>
            <person name="Bargues M."/>
            <person name="Terol J."/>
            <person name="Torres A."/>
            <person name="Perez-Perez A."/>
            <person name="Purnelle B."/>
            <person name="Bent E."/>
            <person name="Johnson S."/>
            <person name="Tacon D."/>
            <person name="Jesse T."/>
            <person name="Heijnen L."/>
            <person name="Schwarz S."/>
            <person name="Scholler P."/>
            <person name="Heber S."/>
            <person name="Francs P."/>
            <person name="Bielke C."/>
            <person name="Frishman D."/>
            <person name="Haase D."/>
            <person name="Lemcke K."/>
            <person name="Mewes H.-W."/>
            <person name="Stocker S."/>
            <person name="Zaccaria P."/>
            <person name="Bevan M."/>
            <person name="Wilson R.K."/>
            <person name="de la Bastide M."/>
            <person name="Habermann K."/>
            <person name="Parnell L."/>
            <person name="Dedhia N."/>
            <person name="Gnoj L."/>
            <person name="Schutz K."/>
            <person name="Huang E."/>
            <person name="Spiegel L."/>
            <person name="Sekhon M."/>
            <person name="Murray J."/>
            <person name="Sheet P."/>
            <person name="Cordes M."/>
            <person name="Abu-Threideh J."/>
            <person name="Stoneking T."/>
            <person name="Kalicki J."/>
            <person name="Graves T."/>
            <person name="Harmon G."/>
            <person name="Edwards J."/>
            <person name="Latreille P."/>
            <person name="Courtney L."/>
            <person name="Cloud J."/>
            <person name="Abbott A."/>
            <person name="Scott K."/>
            <person name="Johnson D."/>
            <person name="Minx P."/>
            <person name="Bentley D."/>
            <person name="Fulton B."/>
            <person name="Miller N."/>
            <person name="Greco T."/>
            <person name="Kemp K."/>
            <person name="Kramer J."/>
            <person name="Fulton L."/>
            <person name="Mardis E."/>
            <person name="Dante M."/>
            <person name="Pepin K."/>
            <person name="Hillier L.W."/>
            <person name="Nelson J."/>
            <person name="Spieth J."/>
            <person name="Ryan E."/>
            <person name="Andrews S."/>
            <person name="Geisel C."/>
            <person name="Layman D."/>
            <person name="Du H."/>
            <person name="Ali J."/>
            <person name="Berghoff A."/>
            <person name="Jones K."/>
            <person name="Drone K."/>
            <person name="Cotton M."/>
            <person name="Joshu C."/>
            <person name="Antonoiu B."/>
            <person name="Zidanic M."/>
            <person name="Strong C."/>
            <person name="Sun H."/>
            <person name="Lamar B."/>
            <person name="Yordan C."/>
            <person name="Ma P."/>
            <person name="Zhong J."/>
            <person name="Preston R."/>
            <person name="Vil D."/>
            <person name="Shekher M."/>
            <person name="Matero A."/>
            <person name="Shah R."/>
            <person name="Swaby I.K."/>
            <person name="O'Shaughnessy A."/>
            <person name="Rodriguez M."/>
            <person name="Hoffman J."/>
            <person name="Till S."/>
            <person name="Granat S."/>
            <person name="Shohdy N."/>
            <person name="Hasegawa A."/>
            <person name="Hameed A."/>
            <person name="Lodhi M."/>
            <person name="Johnson A."/>
            <person name="Chen E."/>
            <person name="Marra M.A."/>
            <person name="Martienssen R."/>
            <person name="McCombie W.R."/>
        </authorList>
    </citation>
    <scope>NUCLEOTIDE SEQUENCE [LARGE SCALE GENOMIC DNA]</scope>
    <source>
        <strain>cv. Columbia</strain>
    </source>
</reference>
<reference key="2">
    <citation type="journal article" date="2017" name="Plant J.">
        <title>Araport11: a complete reannotation of the Arabidopsis thaliana reference genome.</title>
        <authorList>
            <person name="Cheng C.Y."/>
            <person name="Krishnakumar V."/>
            <person name="Chan A.P."/>
            <person name="Thibaud-Nissen F."/>
            <person name="Schobel S."/>
            <person name="Town C.D."/>
        </authorList>
    </citation>
    <scope>GENOME REANNOTATION</scope>
    <source>
        <strain>cv. Columbia</strain>
    </source>
</reference>
<reference key="3">
    <citation type="journal article" date="2003" name="Science">
        <title>Empirical analysis of transcriptional activity in the Arabidopsis genome.</title>
        <authorList>
            <person name="Yamada K."/>
            <person name="Lim J."/>
            <person name="Dale J.M."/>
            <person name="Chen H."/>
            <person name="Shinn P."/>
            <person name="Palm C.J."/>
            <person name="Southwick A.M."/>
            <person name="Wu H.C."/>
            <person name="Kim C.J."/>
            <person name="Nguyen M."/>
            <person name="Pham P.K."/>
            <person name="Cheuk R.F."/>
            <person name="Karlin-Newmann G."/>
            <person name="Liu S.X."/>
            <person name="Lam B."/>
            <person name="Sakano H."/>
            <person name="Wu T."/>
            <person name="Yu G."/>
            <person name="Miranda M."/>
            <person name="Quach H.L."/>
            <person name="Tripp M."/>
            <person name="Chang C.H."/>
            <person name="Lee J.M."/>
            <person name="Toriumi M.J."/>
            <person name="Chan M.M."/>
            <person name="Tang C.C."/>
            <person name="Onodera C.S."/>
            <person name="Deng J.M."/>
            <person name="Akiyama K."/>
            <person name="Ansari Y."/>
            <person name="Arakawa T."/>
            <person name="Banh J."/>
            <person name="Banno F."/>
            <person name="Bowser L."/>
            <person name="Brooks S.Y."/>
            <person name="Carninci P."/>
            <person name="Chao Q."/>
            <person name="Choy N."/>
            <person name="Enju A."/>
            <person name="Goldsmith A.D."/>
            <person name="Gurjal M."/>
            <person name="Hansen N.F."/>
            <person name="Hayashizaki Y."/>
            <person name="Johnson-Hopson C."/>
            <person name="Hsuan V.W."/>
            <person name="Iida K."/>
            <person name="Karnes M."/>
            <person name="Khan S."/>
            <person name="Koesema E."/>
            <person name="Ishida J."/>
            <person name="Jiang P.X."/>
            <person name="Jones T."/>
            <person name="Kawai J."/>
            <person name="Kamiya A."/>
            <person name="Meyers C."/>
            <person name="Nakajima M."/>
            <person name="Narusaka M."/>
            <person name="Seki M."/>
            <person name="Sakurai T."/>
            <person name="Satou M."/>
            <person name="Tamse R."/>
            <person name="Vaysberg M."/>
            <person name="Wallender E.K."/>
            <person name="Wong C."/>
            <person name="Yamamura Y."/>
            <person name="Yuan S."/>
            <person name="Shinozaki K."/>
            <person name="Davis R.W."/>
            <person name="Theologis A."/>
            <person name="Ecker J.R."/>
        </authorList>
    </citation>
    <scope>NUCLEOTIDE SEQUENCE [LARGE SCALE MRNA]</scope>
    <source>
        <strain>cv. Columbia</strain>
    </source>
</reference>
<reference key="4">
    <citation type="submission" date="2006-06" db="EMBL/GenBank/DDBJ databases">
        <title>Functional differentiation of ubiquitin-interacting factors from Arabidopsis.</title>
        <authorList>
            <person name="Fu H."/>
        </authorList>
    </citation>
    <scope>NUCLEOTIDE SEQUENCE [MRNA] OF 314-577</scope>
    <source>
        <strain>cv. Columbia</strain>
    </source>
</reference>
<reference key="5">
    <citation type="journal article" date="2005" name="Plant J.">
        <title>A duplicated pair of Arabidopsis RING-finger E3 ligases contribute to the RPM1- and RPS2-mediated hypersensitive response.</title>
        <authorList>
            <person name="Kawasaki T."/>
            <person name="Nam J."/>
            <person name="Boyes D.C."/>
            <person name="Holt B.F. III"/>
            <person name="Hubert D.A."/>
            <person name="Wiig A."/>
            <person name="Dangl J.L."/>
        </authorList>
    </citation>
    <scope>FUNCTION</scope>
    <scope>SUBCELLULAR LOCATION</scope>
    <scope>INTERACTION WITH RPM1</scope>
    <scope>INDUCTION</scope>
    <scope>DISRUPTION PHENOTYPE</scope>
    <scope>MUTAGENESIS OF CYS-337</scope>
</reference>
<evidence type="ECO:0000255" key="1"/>
<evidence type="ECO:0000255" key="2">
    <source>
        <dbReference type="PROSITE-ProRule" id="PRU00175"/>
    </source>
</evidence>
<evidence type="ECO:0000255" key="3">
    <source>
        <dbReference type="PROSITE-ProRule" id="PRU00468"/>
    </source>
</evidence>
<evidence type="ECO:0000256" key="4">
    <source>
        <dbReference type="SAM" id="MobiDB-lite"/>
    </source>
</evidence>
<evidence type="ECO:0000269" key="5">
    <source>
    </source>
</evidence>
<evidence type="ECO:0000305" key="6"/>
<sequence length="578" mass="64564">MGIKYLPVSVASTALSFVGLQVWTELSLDRLRADGLIAKNISLGDSEHALELLLGSYFTIALLTNFVLNVYILLVLSLKTLFFGDLYDVETKKLVERLANYIIYKGTFLPLVIPPTIFQGVLWTVWLTVLCTLKMFQALARDRLERLNASPSSTPWTYFRVYSVLFLVLSVDMFWIKLSLMTYNTIGSAVYLLLLFEPCSIAFETLQALLIHGFQLLDMWINHLAVKNSDCQRSKFIDSMTAGSLLEWKGLLNRNLGFFLDMATLVMALGHYLHIWWLHGIAFHLVDAVLFLNIRALLSAILKRIKGYIKLRIALGALHAALPDATSEELRAYDDECAICREPMAKAKRLHCNHLFHLGCLRSWLDQGLNEVYSCPTCRKPLFVGRTENEVNPRTVEVSSDEQLARQLERQNNPVHALATGLFPAEVPDSVENDTSRNLGLDPSWLQTWSSQGSDVAGPSTTSRTVGLGRVQMMMRHLASVGESYAQTALDDAAWSLWPMNPSQASTSSTTVPPGNGGRTGGLHLRTVSNTTNESLTNILAMAETVREVMPHVPDEIIFQDLQRTNSVAVTVNNLLQM</sequence>
<organism>
    <name type="scientific">Arabidopsis thaliana</name>
    <name type="common">Mouse-ear cress</name>
    <dbReference type="NCBI Taxonomy" id="3702"/>
    <lineage>
        <taxon>Eukaryota</taxon>
        <taxon>Viridiplantae</taxon>
        <taxon>Streptophyta</taxon>
        <taxon>Embryophyta</taxon>
        <taxon>Tracheophyta</taxon>
        <taxon>Spermatophyta</taxon>
        <taxon>Magnoliopsida</taxon>
        <taxon>eudicotyledons</taxon>
        <taxon>Gunneridae</taxon>
        <taxon>Pentapetalae</taxon>
        <taxon>rosids</taxon>
        <taxon>malvids</taxon>
        <taxon>Brassicales</taxon>
        <taxon>Brassicaceae</taxon>
        <taxon>Camelineae</taxon>
        <taxon>Arabidopsis</taxon>
    </lineage>
</organism>
<feature type="chain" id="PRO_0000395753" description="E3 ubiquitin protein ligase RIN2">
    <location>
        <begin position="1"/>
        <end position="578"/>
    </location>
</feature>
<feature type="transmembrane region" description="Helical" evidence="1">
    <location>
        <begin position="6"/>
        <end position="26"/>
    </location>
</feature>
<feature type="transmembrane region" description="Helical" evidence="1">
    <location>
        <begin position="58"/>
        <end position="78"/>
    </location>
</feature>
<feature type="transmembrane region" description="Helical" evidence="1">
    <location>
        <begin position="111"/>
        <end position="131"/>
    </location>
</feature>
<feature type="transmembrane region" description="Helical" evidence="1">
    <location>
        <begin position="161"/>
        <end position="181"/>
    </location>
</feature>
<feature type="transmembrane region" description="Helical" evidence="1">
    <location>
        <begin position="186"/>
        <end position="206"/>
    </location>
</feature>
<feature type="transmembrane region" description="Helical" evidence="1">
    <location>
        <begin position="272"/>
        <end position="292"/>
    </location>
</feature>
<feature type="domain" description="CUE" evidence="3">
    <location>
        <begin position="538"/>
        <end position="578"/>
    </location>
</feature>
<feature type="zinc finger region" description="RING-type; atypical" evidence="2">
    <location>
        <begin position="337"/>
        <end position="379"/>
    </location>
</feature>
<feature type="region of interest" description="Disordered" evidence="4">
    <location>
        <begin position="504"/>
        <end position="524"/>
    </location>
</feature>
<feature type="compositionally biased region" description="Polar residues" evidence="4">
    <location>
        <begin position="504"/>
        <end position="513"/>
    </location>
</feature>
<feature type="mutagenesis site" description="Loss of E3 ubiquitin ligase activity." evidence="5">
    <original>C</original>
    <variation>A</variation>
    <location>
        <position position="337"/>
    </location>
</feature>
<proteinExistence type="evidence at protein level"/>
<keyword id="KW-0381">Hypersensitive response</keyword>
<keyword id="KW-0472">Membrane</keyword>
<keyword id="KW-0479">Metal-binding</keyword>
<keyword id="KW-0611">Plant defense</keyword>
<keyword id="KW-1185">Reference proteome</keyword>
<keyword id="KW-0808">Transferase</keyword>
<keyword id="KW-0812">Transmembrane</keyword>
<keyword id="KW-1133">Transmembrane helix</keyword>
<keyword id="KW-0833">Ubl conjugation pathway</keyword>
<keyword id="KW-0862">Zinc</keyword>
<keyword id="KW-0863">Zinc-finger</keyword>
<protein>
    <recommendedName>
        <fullName>E3 ubiquitin protein ligase RIN2</fullName>
        <ecNumber>2.3.2.27</ecNumber>
    </recommendedName>
    <alternativeName>
        <fullName>AMF receptor-like protein 1A</fullName>
    </alternativeName>
    <alternativeName>
        <fullName evidence="6">RING-type E3 ubiquitin transferase RIN2</fullName>
    </alternativeName>
    <alternativeName>
        <fullName>RPM1-interacting protein 2</fullName>
    </alternativeName>
</protein>
<accession>Q8VYC8</accession>
<accession>A6XER5</accession>
<accession>Q9SB40</accession>
<comment type="function">
    <text evidence="5">E3 ubiquitin protein ligase that acts as a positive regulator of RPM1- and RPS2-dependent hypersensitive response (HR), in association with RIN3. Probably not required for RPM1 degradation during HR.</text>
</comment>
<comment type="catalytic activity">
    <reaction>
        <text>S-ubiquitinyl-[E2 ubiquitin-conjugating enzyme]-L-cysteine + [acceptor protein]-L-lysine = [E2 ubiquitin-conjugating enzyme]-L-cysteine + N(6)-ubiquitinyl-[acceptor protein]-L-lysine.</text>
        <dbReference type="EC" id="2.3.2.27"/>
    </reaction>
</comment>
<comment type="pathway">
    <text>Protein modification; protein ubiquitination.</text>
</comment>
<comment type="subunit">
    <text evidence="5">Interacts (via C-terminus) with RPM1 (via N-terminus).</text>
</comment>
<comment type="subcellular location">
    <subcellularLocation>
        <location evidence="5">Membrane</location>
        <topology evidence="5">Multi-pass membrane protein</topology>
    </subcellularLocation>
</comment>
<comment type="induction">
    <text evidence="5">Repressed upon infection with the P.syringae avirulent DC3000 strains containing avrRpm1 or avrRpt2 (at protein level).</text>
</comment>
<comment type="disruption phenotype">
    <text evidence="5">No visible phenotype.</text>
</comment>
<comment type="sequence caution" evidence="6">
    <conflict type="erroneous gene model prediction">
        <sequence resource="EMBL-CDS" id="CAA23064"/>
    </conflict>
</comment>
<comment type="sequence caution" evidence="6">
    <conflict type="erroneous gene model prediction">
        <sequence resource="EMBL-CDS" id="CAB81334"/>
    </conflict>
</comment>
<name>RIN2_ARATH</name>
<dbReference type="EC" id="2.3.2.27"/>
<dbReference type="EMBL" id="AL035396">
    <property type="protein sequence ID" value="CAA23064.1"/>
    <property type="status" value="ALT_SEQ"/>
    <property type="molecule type" value="Genomic_DNA"/>
</dbReference>
<dbReference type="EMBL" id="AL161563">
    <property type="protein sequence ID" value="CAB81334.1"/>
    <property type="status" value="ALT_SEQ"/>
    <property type="molecule type" value="Genomic_DNA"/>
</dbReference>
<dbReference type="EMBL" id="CP002687">
    <property type="protein sequence ID" value="AEE85028.1"/>
    <property type="molecule type" value="Genomic_DNA"/>
</dbReference>
<dbReference type="EMBL" id="CP002687">
    <property type="protein sequence ID" value="AEE85029.1"/>
    <property type="molecule type" value="Genomic_DNA"/>
</dbReference>
<dbReference type="EMBL" id="CP002687">
    <property type="protein sequence ID" value="ANM66650.1"/>
    <property type="molecule type" value="Genomic_DNA"/>
</dbReference>
<dbReference type="EMBL" id="AY072178">
    <property type="protein sequence ID" value="AAL60000.1"/>
    <property type="molecule type" value="mRNA"/>
</dbReference>
<dbReference type="EMBL" id="DQ677669">
    <property type="protein sequence ID" value="ABG85249.1"/>
    <property type="molecule type" value="mRNA"/>
</dbReference>
<dbReference type="RefSeq" id="NP_001328533.1">
    <property type="nucleotide sequence ID" value="NM_001341724.1"/>
</dbReference>
<dbReference type="RefSeq" id="NP_194253.2">
    <property type="nucleotide sequence ID" value="NM_118655.4"/>
</dbReference>
<dbReference type="RefSeq" id="NP_849552.1">
    <property type="nucleotide sequence ID" value="NM_179221.2"/>
</dbReference>
<dbReference type="SMR" id="Q8VYC8"/>
<dbReference type="BioGRID" id="13913">
    <property type="interactions" value="4"/>
</dbReference>
<dbReference type="FunCoup" id="Q8VYC8">
    <property type="interactions" value="722"/>
</dbReference>
<dbReference type="STRING" id="3702.Q8VYC8"/>
<dbReference type="PaxDb" id="3702-AT4G25230.1"/>
<dbReference type="ProteomicsDB" id="236866"/>
<dbReference type="EnsemblPlants" id="AT4G25230.1">
    <property type="protein sequence ID" value="AT4G25230.1"/>
    <property type="gene ID" value="AT4G25230"/>
</dbReference>
<dbReference type="EnsemblPlants" id="AT4G25230.2">
    <property type="protein sequence ID" value="AT4G25230.2"/>
    <property type="gene ID" value="AT4G25230"/>
</dbReference>
<dbReference type="EnsemblPlants" id="AT4G25230.3">
    <property type="protein sequence ID" value="AT4G25230.3"/>
    <property type="gene ID" value="AT4G25230"/>
</dbReference>
<dbReference type="GeneID" id="828626"/>
<dbReference type="Gramene" id="AT4G25230.1">
    <property type="protein sequence ID" value="AT4G25230.1"/>
    <property type="gene ID" value="AT4G25230"/>
</dbReference>
<dbReference type="Gramene" id="AT4G25230.2">
    <property type="protein sequence ID" value="AT4G25230.2"/>
    <property type="gene ID" value="AT4G25230"/>
</dbReference>
<dbReference type="Gramene" id="AT4G25230.3">
    <property type="protein sequence ID" value="AT4G25230.3"/>
    <property type="gene ID" value="AT4G25230"/>
</dbReference>
<dbReference type="KEGG" id="ath:AT4G25230"/>
<dbReference type="Araport" id="AT4G25230"/>
<dbReference type="TAIR" id="AT4G25230">
    <property type="gene designation" value="RIN2"/>
</dbReference>
<dbReference type="eggNOG" id="KOG0802">
    <property type="taxonomic scope" value="Eukaryota"/>
</dbReference>
<dbReference type="HOGENOM" id="CLU_029305_1_0_1"/>
<dbReference type="InParanoid" id="Q8VYC8"/>
<dbReference type="OMA" id="GLTEMYT"/>
<dbReference type="PhylomeDB" id="Q8VYC8"/>
<dbReference type="UniPathway" id="UPA00143"/>
<dbReference type="PRO" id="PR:Q8VYC8"/>
<dbReference type="Proteomes" id="UP000006548">
    <property type="component" value="Chromosome 4"/>
</dbReference>
<dbReference type="ExpressionAtlas" id="Q8VYC8">
    <property type="expression patterns" value="baseline and differential"/>
</dbReference>
<dbReference type="GO" id="GO:0005886">
    <property type="term" value="C:plasma membrane"/>
    <property type="evidence" value="ECO:0000314"/>
    <property type="project" value="TAIR"/>
</dbReference>
<dbReference type="GO" id="GO:0043130">
    <property type="term" value="F:ubiquitin binding"/>
    <property type="evidence" value="ECO:0007669"/>
    <property type="project" value="InterPro"/>
</dbReference>
<dbReference type="GO" id="GO:0004842">
    <property type="term" value="F:ubiquitin-protein transferase activity"/>
    <property type="evidence" value="ECO:0000314"/>
    <property type="project" value="TAIR"/>
</dbReference>
<dbReference type="GO" id="GO:0008270">
    <property type="term" value="F:zinc ion binding"/>
    <property type="evidence" value="ECO:0007669"/>
    <property type="project" value="UniProtKB-KW"/>
</dbReference>
<dbReference type="GO" id="GO:0009626">
    <property type="term" value="P:plant-type hypersensitive response"/>
    <property type="evidence" value="ECO:0007669"/>
    <property type="project" value="UniProtKB-KW"/>
</dbReference>
<dbReference type="GO" id="GO:0034052">
    <property type="term" value="P:positive regulation of plant-type hypersensitive response"/>
    <property type="evidence" value="ECO:0000316"/>
    <property type="project" value="TAIR"/>
</dbReference>
<dbReference type="GO" id="GO:0016567">
    <property type="term" value="P:protein ubiquitination"/>
    <property type="evidence" value="ECO:0007669"/>
    <property type="project" value="UniProtKB-UniPathway"/>
</dbReference>
<dbReference type="CDD" id="cd14422">
    <property type="entry name" value="CUE_RIN3_plant"/>
    <property type="match status" value="1"/>
</dbReference>
<dbReference type="CDD" id="cd16455">
    <property type="entry name" value="RING-H2_AMFR"/>
    <property type="match status" value="1"/>
</dbReference>
<dbReference type="FunFam" id="1.10.8.10:FF:000054">
    <property type="entry name" value="E3 ubiquitin protein ligase RIN2"/>
    <property type="match status" value="1"/>
</dbReference>
<dbReference type="FunFam" id="3.30.40.10:FF:000259">
    <property type="entry name" value="E3 ubiquitin protein ligase RIN2"/>
    <property type="match status" value="1"/>
</dbReference>
<dbReference type="Gene3D" id="1.10.8.10">
    <property type="entry name" value="DNA helicase RuvA subunit, C-terminal domain"/>
    <property type="match status" value="1"/>
</dbReference>
<dbReference type="Gene3D" id="3.30.40.10">
    <property type="entry name" value="Zinc/RING finger domain, C3HC4 (zinc finger)"/>
    <property type="match status" value="1"/>
</dbReference>
<dbReference type="InterPro" id="IPR003892">
    <property type="entry name" value="CUE"/>
</dbReference>
<dbReference type="InterPro" id="IPR035667">
    <property type="entry name" value="RIN3_plant_CUE"/>
</dbReference>
<dbReference type="InterPro" id="IPR001841">
    <property type="entry name" value="Znf_RING"/>
</dbReference>
<dbReference type="InterPro" id="IPR013083">
    <property type="entry name" value="Znf_RING/FYVE/PHD"/>
</dbReference>
<dbReference type="PANTHER" id="PTHR15067">
    <property type="entry name" value="E3 UBIQUITIN-PROTEIN LIGASE RNF8"/>
    <property type="match status" value="1"/>
</dbReference>
<dbReference type="PANTHER" id="PTHR15067:SF4">
    <property type="entry name" value="E3 UBIQUITIN-PROTEIN LIGASE RNF8"/>
    <property type="match status" value="1"/>
</dbReference>
<dbReference type="Pfam" id="PF02845">
    <property type="entry name" value="CUE"/>
    <property type="match status" value="1"/>
</dbReference>
<dbReference type="Pfam" id="PF13639">
    <property type="entry name" value="zf-RING_2"/>
    <property type="match status" value="1"/>
</dbReference>
<dbReference type="SMART" id="SM00184">
    <property type="entry name" value="RING"/>
    <property type="match status" value="1"/>
</dbReference>
<dbReference type="SUPFAM" id="SSF88633">
    <property type="entry name" value="Positive stranded ssRNA viruses"/>
    <property type="match status" value="1"/>
</dbReference>
<dbReference type="SUPFAM" id="SSF57850">
    <property type="entry name" value="RING/U-box"/>
    <property type="match status" value="1"/>
</dbReference>
<dbReference type="PROSITE" id="PS51140">
    <property type="entry name" value="CUE"/>
    <property type="match status" value="1"/>
</dbReference>
<dbReference type="PROSITE" id="PS50089">
    <property type="entry name" value="ZF_RING_2"/>
    <property type="match status" value="1"/>
</dbReference>
<gene>
    <name type="primary">RIN2</name>
    <name type="synonym">AMFR-1A</name>
    <name type="ordered locus">At4g25230</name>
    <name type="ORF">F24A6.70</name>
</gene>